<organism>
    <name type="scientific">Escherichia coli O157:H7 (strain EC4115 / EHEC)</name>
    <dbReference type="NCBI Taxonomy" id="444450"/>
    <lineage>
        <taxon>Bacteria</taxon>
        <taxon>Pseudomonadati</taxon>
        <taxon>Pseudomonadota</taxon>
        <taxon>Gammaproteobacteria</taxon>
        <taxon>Enterobacterales</taxon>
        <taxon>Enterobacteriaceae</taxon>
        <taxon>Escherichia</taxon>
    </lineage>
</organism>
<name>SYR_ECO5E</name>
<proteinExistence type="inferred from homology"/>
<dbReference type="EC" id="6.1.1.19" evidence="1"/>
<dbReference type="EMBL" id="CP001164">
    <property type="protein sequence ID" value="ACI34752.1"/>
    <property type="molecule type" value="Genomic_DNA"/>
</dbReference>
<dbReference type="RefSeq" id="WP_001025318.1">
    <property type="nucleotide sequence ID" value="NC_011353.1"/>
</dbReference>
<dbReference type="SMR" id="B5YR22"/>
<dbReference type="KEGG" id="ecf:ECH74115_2613"/>
<dbReference type="HOGENOM" id="CLU_006406_5_1_6"/>
<dbReference type="GO" id="GO:0005737">
    <property type="term" value="C:cytoplasm"/>
    <property type="evidence" value="ECO:0007669"/>
    <property type="project" value="UniProtKB-SubCell"/>
</dbReference>
<dbReference type="GO" id="GO:0004814">
    <property type="term" value="F:arginine-tRNA ligase activity"/>
    <property type="evidence" value="ECO:0007669"/>
    <property type="project" value="UniProtKB-UniRule"/>
</dbReference>
<dbReference type="GO" id="GO:0005524">
    <property type="term" value="F:ATP binding"/>
    <property type="evidence" value="ECO:0007669"/>
    <property type="project" value="UniProtKB-UniRule"/>
</dbReference>
<dbReference type="GO" id="GO:0006420">
    <property type="term" value="P:arginyl-tRNA aminoacylation"/>
    <property type="evidence" value="ECO:0007669"/>
    <property type="project" value="UniProtKB-UniRule"/>
</dbReference>
<dbReference type="CDD" id="cd07956">
    <property type="entry name" value="Anticodon_Ia_Arg"/>
    <property type="match status" value="1"/>
</dbReference>
<dbReference type="CDD" id="cd00671">
    <property type="entry name" value="ArgRS_core"/>
    <property type="match status" value="1"/>
</dbReference>
<dbReference type="FunFam" id="1.10.730.10:FF:000001">
    <property type="entry name" value="Arginine--tRNA ligase"/>
    <property type="match status" value="1"/>
</dbReference>
<dbReference type="FunFam" id="3.30.1360.70:FF:000001">
    <property type="entry name" value="Arginine--tRNA ligase"/>
    <property type="match status" value="1"/>
</dbReference>
<dbReference type="FunFam" id="3.40.50.620:FF:000030">
    <property type="entry name" value="Arginine--tRNA ligase"/>
    <property type="match status" value="1"/>
</dbReference>
<dbReference type="Gene3D" id="3.30.1360.70">
    <property type="entry name" value="Arginyl tRNA synthetase N-terminal domain"/>
    <property type="match status" value="1"/>
</dbReference>
<dbReference type="Gene3D" id="3.40.50.620">
    <property type="entry name" value="HUPs"/>
    <property type="match status" value="1"/>
</dbReference>
<dbReference type="Gene3D" id="1.10.730.10">
    <property type="entry name" value="Isoleucyl-tRNA Synthetase, Domain 1"/>
    <property type="match status" value="1"/>
</dbReference>
<dbReference type="HAMAP" id="MF_00123">
    <property type="entry name" value="Arg_tRNA_synth"/>
    <property type="match status" value="1"/>
</dbReference>
<dbReference type="InterPro" id="IPR001412">
    <property type="entry name" value="aa-tRNA-synth_I_CS"/>
</dbReference>
<dbReference type="InterPro" id="IPR001278">
    <property type="entry name" value="Arg-tRNA-ligase"/>
</dbReference>
<dbReference type="InterPro" id="IPR005148">
    <property type="entry name" value="Arg-tRNA-synth_N"/>
</dbReference>
<dbReference type="InterPro" id="IPR036695">
    <property type="entry name" value="Arg-tRNA-synth_N_sf"/>
</dbReference>
<dbReference type="InterPro" id="IPR035684">
    <property type="entry name" value="ArgRS_core"/>
</dbReference>
<dbReference type="InterPro" id="IPR008909">
    <property type="entry name" value="DALR_anticod-bd"/>
</dbReference>
<dbReference type="InterPro" id="IPR014729">
    <property type="entry name" value="Rossmann-like_a/b/a_fold"/>
</dbReference>
<dbReference type="InterPro" id="IPR009080">
    <property type="entry name" value="tRNAsynth_Ia_anticodon-bd"/>
</dbReference>
<dbReference type="NCBIfam" id="TIGR00456">
    <property type="entry name" value="argS"/>
    <property type="match status" value="1"/>
</dbReference>
<dbReference type="PANTHER" id="PTHR11956:SF5">
    <property type="entry name" value="ARGININE--TRNA LIGASE, CYTOPLASMIC"/>
    <property type="match status" value="1"/>
</dbReference>
<dbReference type="PANTHER" id="PTHR11956">
    <property type="entry name" value="ARGINYL-TRNA SYNTHETASE"/>
    <property type="match status" value="1"/>
</dbReference>
<dbReference type="Pfam" id="PF03485">
    <property type="entry name" value="Arg_tRNA_synt_N"/>
    <property type="match status" value="1"/>
</dbReference>
<dbReference type="Pfam" id="PF05746">
    <property type="entry name" value="DALR_1"/>
    <property type="match status" value="1"/>
</dbReference>
<dbReference type="Pfam" id="PF00750">
    <property type="entry name" value="tRNA-synt_1d"/>
    <property type="match status" value="1"/>
</dbReference>
<dbReference type="PRINTS" id="PR01038">
    <property type="entry name" value="TRNASYNTHARG"/>
</dbReference>
<dbReference type="SMART" id="SM01016">
    <property type="entry name" value="Arg_tRNA_synt_N"/>
    <property type="match status" value="1"/>
</dbReference>
<dbReference type="SMART" id="SM00836">
    <property type="entry name" value="DALR_1"/>
    <property type="match status" value="1"/>
</dbReference>
<dbReference type="SUPFAM" id="SSF47323">
    <property type="entry name" value="Anticodon-binding domain of a subclass of class I aminoacyl-tRNA synthetases"/>
    <property type="match status" value="1"/>
</dbReference>
<dbReference type="SUPFAM" id="SSF55190">
    <property type="entry name" value="Arginyl-tRNA synthetase (ArgRS), N-terminal 'additional' domain"/>
    <property type="match status" value="1"/>
</dbReference>
<dbReference type="SUPFAM" id="SSF52374">
    <property type="entry name" value="Nucleotidylyl transferase"/>
    <property type="match status" value="1"/>
</dbReference>
<dbReference type="PROSITE" id="PS00178">
    <property type="entry name" value="AA_TRNA_LIGASE_I"/>
    <property type="match status" value="1"/>
</dbReference>
<comment type="catalytic activity">
    <reaction evidence="1">
        <text>tRNA(Arg) + L-arginine + ATP = L-arginyl-tRNA(Arg) + AMP + diphosphate</text>
        <dbReference type="Rhea" id="RHEA:20301"/>
        <dbReference type="Rhea" id="RHEA-COMP:9658"/>
        <dbReference type="Rhea" id="RHEA-COMP:9673"/>
        <dbReference type="ChEBI" id="CHEBI:30616"/>
        <dbReference type="ChEBI" id="CHEBI:32682"/>
        <dbReference type="ChEBI" id="CHEBI:33019"/>
        <dbReference type="ChEBI" id="CHEBI:78442"/>
        <dbReference type="ChEBI" id="CHEBI:78513"/>
        <dbReference type="ChEBI" id="CHEBI:456215"/>
        <dbReference type="EC" id="6.1.1.19"/>
    </reaction>
</comment>
<comment type="subunit">
    <text evidence="1">Monomer.</text>
</comment>
<comment type="subcellular location">
    <subcellularLocation>
        <location evidence="1">Cytoplasm</location>
    </subcellularLocation>
</comment>
<comment type="similarity">
    <text evidence="1">Belongs to the class-I aminoacyl-tRNA synthetase family.</text>
</comment>
<accession>B5YR22</accession>
<keyword id="KW-0030">Aminoacyl-tRNA synthetase</keyword>
<keyword id="KW-0067">ATP-binding</keyword>
<keyword id="KW-0963">Cytoplasm</keyword>
<keyword id="KW-0436">Ligase</keyword>
<keyword id="KW-0547">Nucleotide-binding</keyword>
<keyword id="KW-0648">Protein biosynthesis</keyword>
<feature type="chain" id="PRO_1000095360" description="Arginine--tRNA ligase">
    <location>
        <begin position="1"/>
        <end position="577"/>
    </location>
</feature>
<feature type="short sequence motif" description="'HIGH' region">
    <location>
        <begin position="122"/>
        <end position="132"/>
    </location>
</feature>
<reference key="1">
    <citation type="journal article" date="2011" name="Proc. Natl. Acad. Sci. U.S.A.">
        <title>Genomic anatomy of Escherichia coli O157:H7 outbreaks.</title>
        <authorList>
            <person name="Eppinger M."/>
            <person name="Mammel M.K."/>
            <person name="Leclerc J.E."/>
            <person name="Ravel J."/>
            <person name="Cebula T.A."/>
        </authorList>
    </citation>
    <scope>NUCLEOTIDE SEQUENCE [LARGE SCALE GENOMIC DNA]</scope>
    <source>
        <strain>EC4115 / EHEC</strain>
    </source>
</reference>
<sequence length="577" mass="64664">MNIQALLSEKVRQAMIAAGAPADCEPQVRQSAKVQFGDYQANGMMAVAKKLGMAPRQLAEQVLTHLDLNGIASKVEIAGPGFINIFLDPAFLAEHVQQALASDRLGVATPEKQTIVVDYSAPNVAKEMHVGHLRSTIIGDAAVRTLEFLGHKVIRANHVGDWGTQFGMLIAWLEKQQQENAGEMELADLEGFYRDAKKHYDEDEEFAERARNYVVKLQSGDEYFREMWRKLVDITMTQNQITYDRLNVTLTHDDVMGESLYNPMLPGIVADLKAKGLAVESEGATVVFLDEFKNKEGEPMGVIIQKKDGGYLYTTTDIACAKYRYETLHADRVLYYIDSRQHQHLMQAWAIVRKAGYVPESVPLEHHMFGMMLGKDGKPFKTRAGGTVKLADLLDEALERARRLVAEKNPDMPADELEKLANAVGIGAVKYADLSKNRTTDYIFDWDNMLAFEGNTAPYMQYAYTRVLSVFRKAEIDEEQLAAAPVIIREDREAQLAARLLQFEETLTVVAREGTPHVMCAYLYDLAGLFSGFYEHCPILSAENEEVRNSRLKLAQLTAKTLKLGLDTLGIETVERM</sequence>
<gene>
    <name evidence="1" type="primary">argS</name>
    <name type="ordered locus">ECH74115_2613</name>
</gene>
<evidence type="ECO:0000255" key="1">
    <source>
        <dbReference type="HAMAP-Rule" id="MF_00123"/>
    </source>
</evidence>
<protein>
    <recommendedName>
        <fullName evidence="1">Arginine--tRNA ligase</fullName>
        <ecNumber evidence="1">6.1.1.19</ecNumber>
    </recommendedName>
    <alternativeName>
        <fullName evidence="1">Arginyl-tRNA synthetase</fullName>
        <shortName evidence="1">ArgRS</shortName>
    </alternativeName>
</protein>